<comment type="function">
    <text evidence="1">Specifically catalyzes the cleavage of the D-lactyl ether substituent of MurNAc 6-phosphate, producing GlcNAc 6-phosphate and D-lactate.</text>
</comment>
<comment type="catalytic activity">
    <reaction evidence="1">
        <text>N-acetyl-D-muramate 6-phosphate + H2O = N-acetyl-D-glucosamine 6-phosphate + (R)-lactate</text>
        <dbReference type="Rhea" id="RHEA:26410"/>
        <dbReference type="ChEBI" id="CHEBI:15377"/>
        <dbReference type="ChEBI" id="CHEBI:16004"/>
        <dbReference type="ChEBI" id="CHEBI:57513"/>
        <dbReference type="ChEBI" id="CHEBI:58722"/>
        <dbReference type="EC" id="4.2.1.126"/>
    </reaction>
</comment>
<comment type="pathway">
    <text evidence="1">Amino-sugar metabolism; N-acetylmuramate degradation.</text>
</comment>
<comment type="subunit">
    <text evidence="1">Homodimer.</text>
</comment>
<comment type="miscellaneous">
    <text evidence="1">A lyase-type mechanism (elimination/hydration) is suggested for the cleavage of the lactyl ether bond of MurNAc 6-phosphate, with the formation of an alpha,beta-unsaturated aldehyde intermediate with (E)-stereochemistry, followed by the syn addition of water to give product.</text>
</comment>
<comment type="similarity">
    <text evidence="1">Belongs to the GCKR-like family. MurNAc-6-P etherase subfamily.</text>
</comment>
<accession>Q9CGG6</accession>
<reference key="1">
    <citation type="journal article" date="2001" name="Genome Res.">
        <title>The complete genome sequence of the lactic acid bacterium Lactococcus lactis ssp. lactis IL1403.</title>
        <authorList>
            <person name="Bolotin A."/>
            <person name="Wincker P."/>
            <person name="Mauger S."/>
            <person name="Jaillon O."/>
            <person name="Malarme K."/>
            <person name="Weissenbach J."/>
            <person name="Ehrlich S.D."/>
            <person name="Sorokin A."/>
        </authorList>
    </citation>
    <scope>NUCLEOTIDE SEQUENCE [LARGE SCALE GENOMIC DNA]</scope>
    <source>
        <strain>IL1403</strain>
    </source>
</reference>
<feature type="chain" id="PRO_0000249633" description="N-acetylmuramic acid 6-phosphate etherase">
    <location>
        <begin position="1"/>
        <end position="297"/>
    </location>
</feature>
<feature type="domain" description="SIS" evidence="1">
    <location>
        <begin position="56"/>
        <end position="219"/>
    </location>
</feature>
<feature type="active site" description="Proton donor" evidence="1">
    <location>
        <position position="84"/>
    </location>
</feature>
<feature type="active site" evidence="1">
    <location>
        <position position="115"/>
    </location>
</feature>
<name>MURQ_LACLA</name>
<gene>
    <name evidence="1" type="primary">murQ</name>
    <name type="ordered locus">LL1130</name>
    <name type="ORF">L144334</name>
</gene>
<evidence type="ECO:0000255" key="1">
    <source>
        <dbReference type="HAMAP-Rule" id="MF_00068"/>
    </source>
</evidence>
<sequence length="297" mass="31982">MIDLSTLTTERRNNETFNLDQMTVAEALIKMNNEDKKVAFAVEEALPNIEPVISSAIEAFNKGGRLIYMGAGTSGRLGVLDAAECVPTFGVPATQVIGLIAGGDKAMTVSVEGAEDSLELGRQDLIDLKLNENDLVLGIAASGRTPYVIGALDYAKEIGAKTASLSCNLNAEISKHAEFPIEVDCGPEFLTGSTRLKSGTAQKLILNMISTISMIGIGKVYNNLMVDVKPTNEKLVERSKRIIMQATDCTYEEAEEKFIEADQDVKLAIVMLLTDCAAEEGKTKLVRANGFVKNTLN</sequence>
<protein>
    <recommendedName>
        <fullName evidence="1">N-acetylmuramic acid 6-phosphate etherase</fullName>
        <shortName evidence="1">MurNAc-6-P etherase</shortName>
        <ecNumber evidence="1">4.2.1.126</ecNumber>
    </recommendedName>
    <alternativeName>
        <fullName evidence="1">N-acetylmuramic acid 6-phosphate hydrolase</fullName>
    </alternativeName>
    <alternativeName>
        <fullName evidence="1">N-acetylmuramic acid 6-phosphate lyase</fullName>
    </alternativeName>
</protein>
<keyword id="KW-0119">Carbohydrate metabolism</keyword>
<keyword id="KW-0456">Lyase</keyword>
<keyword id="KW-1185">Reference proteome</keyword>
<organism>
    <name type="scientific">Lactococcus lactis subsp. lactis (strain IL1403)</name>
    <name type="common">Streptococcus lactis</name>
    <dbReference type="NCBI Taxonomy" id="272623"/>
    <lineage>
        <taxon>Bacteria</taxon>
        <taxon>Bacillati</taxon>
        <taxon>Bacillota</taxon>
        <taxon>Bacilli</taxon>
        <taxon>Lactobacillales</taxon>
        <taxon>Streptococcaceae</taxon>
        <taxon>Lactococcus</taxon>
    </lineage>
</organism>
<proteinExistence type="inferred from homology"/>
<dbReference type="EC" id="4.2.1.126" evidence="1"/>
<dbReference type="EMBL" id="AE005176">
    <property type="protein sequence ID" value="AAK05228.1"/>
    <property type="molecule type" value="Genomic_DNA"/>
</dbReference>
<dbReference type="PIR" id="B86766">
    <property type="entry name" value="B86766"/>
</dbReference>
<dbReference type="RefSeq" id="NP_267286.1">
    <property type="nucleotide sequence ID" value="NC_002662.1"/>
</dbReference>
<dbReference type="RefSeq" id="WP_010905775.1">
    <property type="nucleotide sequence ID" value="NC_002662.1"/>
</dbReference>
<dbReference type="SMR" id="Q9CGG6"/>
<dbReference type="PaxDb" id="272623-L144334"/>
<dbReference type="EnsemblBacteria" id="AAK05228">
    <property type="protein sequence ID" value="AAK05228"/>
    <property type="gene ID" value="L144334"/>
</dbReference>
<dbReference type="KEGG" id="lla:L144334"/>
<dbReference type="PATRIC" id="fig|272623.7.peg.1208"/>
<dbReference type="eggNOG" id="COG2103">
    <property type="taxonomic scope" value="Bacteria"/>
</dbReference>
<dbReference type="HOGENOM" id="CLU_049049_1_1_9"/>
<dbReference type="OrthoDB" id="9813395at2"/>
<dbReference type="UniPathway" id="UPA00342"/>
<dbReference type="Proteomes" id="UP000002196">
    <property type="component" value="Chromosome"/>
</dbReference>
<dbReference type="GO" id="GO:0097367">
    <property type="term" value="F:carbohydrate derivative binding"/>
    <property type="evidence" value="ECO:0007669"/>
    <property type="project" value="InterPro"/>
</dbReference>
<dbReference type="GO" id="GO:0016835">
    <property type="term" value="F:carbon-oxygen lyase activity"/>
    <property type="evidence" value="ECO:0007669"/>
    <property type="project" value="UniProtKB-UniRule"/>
</dbReference>
<dbReference type="GO" id="GO:0016803">
    <property type="term" value="F:ether hydrolase activity"/>
    <property type="evidence" value="ECO:0007669"/>
    <property type="project" value="TreeGrafter"/>
</dbReference>
<dbReference type="GO" id="GO:0046348">
    <property type="term" value="P:amino sugar catabolic process"/>
    <property type="evidence" value="ECO:0007669"/>
    <property type="project" value="InterPro"/>
</dbReference>
<dbReference type="GO" id="GO:0097173">
    <property type="term" value="P:N-acetylmuramic acid catabolic process"/>
    <property type="evidence" value="ECO:0007669"/>
    <property type="project" value="UniProtKB-UniPathway"/>
</dbReference>
<dbReference type="GO" id="GO:0009254">
    <property type="term" value="P:peptidoglycan turnover"/>
    <property type="evidence" value="ECO:0007669"/>
    <property type="project" value="TreeGrafter"/>
</dbReference>
<dbReference type="CDD" id="cd05007">
    <property type="entry name" value="SIS_Etherase"/>
    <property type="match status" value="1"/>
</dbReference>
<dbReference type="FunFam" id="1.10.8.1080:FF:000001">
    <property type="entry name" value="N-acetylmuramic acid 6-phosphate etherase"/>
    <property type="match status" value="1"/>
</dbReference>
<dbReference type="FunFam" id="3.40.50.10490:FF:000014">
    <property type="entry name" value="N-acetylmuramic acid 6-phosphate etherase"/>
    <property type="match status" value="1"/>
</dbReference>
<dbReference type="Gene3D" id="1.10.8.1080">
    <property type="match status" value="1"/>
</dbReference>
<dbReference type="Gene3D" id="3.40.50.10490">
    <property type="entry name" value="Glucose-6-phosphate isomerase like protein, domain 1"/>
    <property type="match status" value="1"/>
</dbReference>
<dbReference type="HAMAP" id="MF_00068">
    <property type="entry name" value="MurQ"/>
    <property type="match status" value="1"/>
</dbReference>
<dbReference type="InterPro" id="IPR005488">
    <property type="entry name" value="Etherase_MurQ"/>
</dbReference>
<dbReference type="InterPro" id="IPR005486">
    <property type="entry name" value="Glucokinase_regulatory_CS"/>
</dbReference>
<dbReference type="InterPro" id="IPR040190">
    <property type="entry name" value="MURQ/GCKR"/>
</dbReference>
<dbReference type="InterPro" id="IPR001347">
    <property type="entry name" value="SIS_dom"/>
</dbReference>
<dbReference type="InterPro" id="IPR046348">
    <property type="entry name" value="SIS_dom_sf"/>
</dbReference>
<dbReference type="NCBIfam" id="TIGR00274">
    <property type="entry name" value="N-acetylmuramic acid 6-phosphate etherase"/>
    <property type="match status" value="1"/>
</dbReference>
<dbReference type="NCBIfam" id="NF003915">
    <property type="entry name" value="PRK05441.1"/>
    <property type="match status" value="1"/>
</dbReference>
<dbReference type="NCBIfam" id="NF009222">
    <property type="entry name" value="PRK12570.1"/>
    <property type="match status" value="1"/>
</dbReference>
<dbReference type="PANTHER" id="PTHR10088">
    <property type="entry name" value="GLUCOKINASE REGULATORY PROTEIN"/>
    <property type="match status" value="1"/>
</dbReference>
<dbReference type="PANTHER" id="PTHR10088:SF4">
    <property type="entry name" value="GLUCOKINASE REGULATORY PROTEIN"/>
    <property type="match status" value="1"/>
</dbReference>
<dbReference type="Pfam" id="PF22645">
    <property type="entry name" value="GKRP_SIS_N"/>
    <property type="match status" value="1"/>
</dbReference>
<dbReference type="SUPFAM" id="SSF53697">
    <property type="entry name" value="SIS domain"/>
    <property type="match status" value="1"/>
</dbReference>
<dbReference type="PROSITE" id="PS01272">
    <property type="entry name" value="GCKR"/>
    <property type="match status" value="1"/>
</dbReference>
<dbReference type="PROSITE" id="PS51464">
    <property type="entry name" value="SIS"/>
    <property type="match status" value="1"/>
</dbReference>